<protein>
    <recommendedName>
        <fullName evidence="1">Large ribosomal subunit protein uL29</fullName>
    </recommendedName>
    <alternativeName>
        <fullName evidence="2">50S ribosomal protein L29</fullName>
    </alternativeName>
</protein>
<sequence>MALPKIEDARKLSDEELAEEIAATKRKLFDLRFQQATRRLEKPHEFKHTKHRLGQLMTVEREREIAQTEIAVNSEQ</sequence>
<comment type="similarity">
    <text evidence="1">Belongs to the universal ribosomal protein uL29 family.</text>
</comment>
<gene>
    <name evidence="1" type="primary">rpmC</name>
    <name evidence="1" type="synonym">rpl29</name>
    <name type="ordered locus">PCC7424_3711</name>
</gene>
<organism>
    <name type="scientific">Gloeothece citriformis (strain PCC 7424)</name>
    <name type="common">Cyanothece sp. (strain PCC 7424)</name>
    <dbReference type="NCBI Taxonomy" id="65393"/>
    <lineage>
        <taxon>Bacteria</taxon>
        <taxon>Bacillati</taxon>
        <taxon>Cyanobacteriota</taxon>
        <taxon>Cyanophyceae</taxon>
        <taxon>Oscillatoriophycideae</taxon>
        <taxon>Chroococcales</taxon>
        <taxon>Aphanothecaceae</taxon>
        <taxon>Gloeothece</taxon>
        <taxon>Gloeothece citriformis</taxon>
    </lineage>
</organism>
<evidence type="ECO:0000255" key="1">
    <source>
        <dbReference type="HAMAP-Rule" id="MF_00374"/>
    </source>
</evidence>
<evidence type="ECO:0000305" key="2"/>
<keyword id="KW-1185">Reference proteome</keyword>
<keyword id="KW-0687">Ribonucleoprotein</keyword>
<keyword id="KW-0689">Ribosomal protein</keyword>
<feature type="chain" id="PRO_1000121757" description="Large ribosomal subunit protein uL29">
    <location>
        <begin position="1"/>
        <end position="76"/>
    </location>
</feature>
<proteinExistence type="inferred from homology"/>
<dbReference type="EMBL" id="CP001291">
    <property type="protein sequence ID" value="ACK72092.1"/>
    <property type="molecule type" value="Genomic_DNA"/>
</dbReference>
<dbReference type="RefSeq" id="WP_015955685.1">
    <property type="nucleotide sequence ID" value="NC_011729.1"/>
</dbReference>
<dbReference type="SMR" id="B7KHZ5"/>
<dbReference type="STRING" id="65393.PCC7424_3711"/>
<dbReference type="KEGG" id="cyc:PCC7424_3711"/>
<dbReference type="eggNOG" id="COG0255">
    <property type="taxonomic scope" value="Bacteria"/>
</dbReference>
<dbReference type="HOGENOM" id="CLU_158491_0_0_3"/>
<dbReference type="OrthoDB" id="9815192at2"/>
<dbReference type="Proteomes" id="UP000002384">
    <property type="component" value="Chromosome"/>
</dbReference>
<dbReference type="GO" id="GO:0022625">
    <property type="term" value="C:cytosolic large ribosomal subunit"/>
    <property type="evidence" value="ECO:0007669"/>
    <property type="project" value="TreeGrafter"/>
</dbReference>
<dbReference type="GO" id="GO:0003735">
    <property type="term" value="F:structural constituent of ribosome"/>
    <property type="evidence" value="ECO:0007669"/>
    <property type="project" value="InterPro"/>
</dbReference>
<dbReference type="GO" id="GO:0006412">
    <property type="term" value="P:translation"/>
    <property type="evidence" value="ECO:0007669"/>
    <property type="project" value="UniProtKB-UniRule"/>
</dbReference>
<dbReference type="CDD" id="cd00427">
    <property type="entry name" value="Ribosomal_L29_HIP"/>
    <property type="match status" value="1"/>
</dbReference>
<dbReference type="Gene3D" id="1.10.287.310">
    <property type="match status" value="1"/>
</dbReference>
<dbReference type="HAMAP" id="MF_00374">
    <property type="entry name" value="Ribosomal_uL29"/>
    <property type="match status" value="1"/>
</dbReference>
<dbReference type="InterPro" id="IPR050063">
    <property type="entry name" value="Ribosomal_protein_uL29"/>
</dbReference>
<dbReference type="InterPro" id="IPR001854">
    <property type="entry name" value="Ribosomal_uL29"/>
</dbReference>
<dbReference type="InterPro" id="IPR036049">
    <property type="entry name" value="Ribosomal_uL29_sf"/>
</dbReference>
<dbReference type="NCBIfam" id="TIGR00012">
    <property type="entry name" value="L29"/>
    <property type="match status" value="1"/>
</dbReference>
<dbReference type="PANTHER" id="PTHR10916">
    <property type="entry name" value="60S RIBOSOMAL PROTEIN L35/50S RIBOSOMAL PROTEIN L29"/>
    <property type="match status" value="1"/>
</dbReference>
<dbReference type="PANTHER" id="PTHR10916:SF0">
    <property type="entry name" value="LARGE RIBOSOMAL SUBUNIT PROTEIN UL29C"/>
    <property type="match status" value="1"/>
</dbReference>
<dbReference type="Pfam" id="PF00831">
    <property type="entry name" value="Ribosomal_L29"/>
    <property type="match status" value="1"/>
</dbReference>
<dbReference type="SUPFAM" id="SSF46561">
    <property type="entry name" value="Ribosomal protein L29 (L29p)"/>
    <property type="match status" value="1"/>
</dbReference>
<accession>B7KHZ5</accession>
<name>RL29_GLOC7</name>
<reference key="1">
    <citation type="journal article" date="2011" name="MBio">
        <title>Novel metabolic attributes of the genus Cyanothece, comprising a group of unicellular nitrogen-fixing Cyanobacteria.</title>
        <authorList>
            <person name="Bandyopadhyay A."/>
            <person name="Elvitigala T."/>
            <person name="Welsh E."/>
            <person name="Stockel J."/>
            <person name="Liberton M."/>
            <person name="Min H."/>
            <person name="Sherman L.A."/>
            <person name="Pakrasi H.B."/>
        </authorList>
    </citation>
    <scope>NUCLEOTIDE SEQUENCE [LARGE SCALE GENOMIC DNA]</scope>
    <source>
        <strain>PCC 7424</strain>
    </source>
</reference>